<reference key="1">
    <citation type="journal article" date="2002" name="Proc. Natl. Acad. Sci. U.S.A.">
        <title>Genome sequence of Streptococcus mutans UA159, a cariogenic dental pathogen.</title>
        <authorList>
            <person name="Ajdic D.J."/>
            <person name="McShan W.M."/>
            <person name="McLaughlin R.E."/>
            <person name="Savic G."/>
            <person name="Chang J."/>
            <person name="Carson M.B."/>
            <person name="Primeaux C."/>
            <person name="Tian R."/>
            <person name="Kenton S."/>
            <person name="Jia H.G."/>
            <person name="Lin S.P."/>
            <person name="Qian Y."/>
            <person name="Li S."/>
            <person name="Zhu H."/>
            <person name="Najar F.Z."/>
            <person name="Lai H."/>
            <person name="White J."/>
            <person name="Roe B.A."/>
            <person name="Ferretti J.J."/>
        </authorList>
    </citation>
    <scope>NUCLEOTIDE SEQUENCE [LARGE SCALE GENOMIC DNA]</scope>
    <source>
        <strain>ATCC 700610 / UA159</strain>
    </source>
</reference>
<reference key="2">
    <citation type="journal article" date="2009" name="J. Bacteriol.">
        <title>3'-Phosphoadenosine-5'-phosphate phosphatase activity is required for superoxide stress tolerance in Streptococcus mutans.</title>
        <authorList>
            <person name="Zhang J."/>
            <person name="Biswas I."/>
        </authorList>
    </citation>
    <scope>FUNCTION AS A PAP PHOSPHATASE</scope>
    <scope>COFACTOR</scope>
    <scope>COMPLEMENTATION OF E.COLI CYSQ MUTANT</scope>
    <scope>OPERON STRUCTURE</scope>
    <scope>DISRUPTION PHENOTYPE</scope>
    <source>
        <strain>ATCC 700610 / UA159</strain>
    </source>
</reference>
<reference key="3">
    <citation type="journal article" date="2012" name="RNA">
        <title>Characterization of NrnA homologs from Mycobacterium tuberculosis and Mycoplasma pneumoniae.</title>
        <authorList>
            <person name="Postic G."/>
            <person name="Danchin A."/>
            <person name="Mechold U."/>
        </authorList>
    </citation>
    <scope>COMPLEMENTATION OF E.COLI ORN MUTANT</scope>
    <source>
        <strain>ATCC 700610 / UA159</strain>
    </source>
</reference>
<gene>
    <name type="primary">nrnA</name>
    <name type="ordered locus">SMU_1297</name>
</gene>
<keyword id="KW-0269">Exonuclease</keyword>
<keyword id="KW-0378">Hydrolase</keyword>
<keyword id="KW-0540">Nuclease</keyword>
<keyword id="KW-1185">Reference proteome</keyword>
<keyword id="KW-0346">Stress response</keyword>
<accession>Q8DTN6</accession>
<organism>
    <name type="scientific">Streptococcus mutans serotype c (strain ATCC 700610 / UA159)</name>
    <dbReference type="NCBI Taxonomy" id="210007"/>
    <lineage>
        <taxon>Bacteria</taxon>
        <taxon>Bacillati</taxon>
        <taxon>Bacillota</taxon>
        <taxon>Bacilli</taxon>
        <taxon>Lactobacillales</taxon>
        <taxon>Streptococcaceae</taxon>
        <taxon>Streptococcus</taxon>
    </lineage>
</organism>
<sequence length="310" mass="34625">MTAFKTILAKIKAYDTIIIHRHMKPDPDALGSQVGLKEMITSNFPQKTVKVTGYNEPSLSWLAQMDDVSDKDYEGALVIVVDTANRPRIDDQRYLNGNFLIKIDHHPDEDHYGDLSYVDTKASSASEIITDFALQNQLKLSDQAARLLYAGILGDTGRFLYPATTSKTFIIASELLKYDFDFAALARQMDSFPYKIAKLQAYVFENLEIDKNGAARIILSQKILKKFNLTDAETSAIVSSPGKIDTVQVWAIFVEQADGHYRVRLRSKSTVINEVAKRHAGGGHPLASGANSYSLAENEDIYQELKNLLK</sequence>
<dbReference type="EC" id="3.1.-.-"/>
<dbReference type="EC" id="3.1.3.7"/>
<dbReference type="EMBL" id="AE014133">
    <property type="protein sequence ID" value="AAN58974.1"/>
    <property type="molecule type" value="Genomic_DNA"/>
</dbReference>
<dbReference type="RefSeq" id="NP_721668.1">
    <property type="nucleotide sequence ID" value="NC_004350.2"/>
</dbReference>
<dbReference type="RefSeq" id="WP_002263149.1">
    <property type="nucleotide sequence ID" value="NC_004350.2"/>
</dbReference>
<dbReference type="SMR" id="Q8DTN6"/>
<dbReference type="STRING" id="210007.SMU_1297"/>
<dbReference type="KEGG" id="smu:SMU_1297"/>
<dbReference type="PATRIC" id="fig|210007.7.peg.1162"/>
<dbReference type="eggNOG" id="COG0618">
    <property type="taxonomic scope" value="Bacteria"/>
</dbReference>
<dbReference type="HOGENOM" id="CLU_039720_1_0_9"/>
<dbReference type="OrthoDB" id="9803668at2"/>
<dbReference type="PhylomeDB" id="Q8DTN6"/>
<dbReference type="Proteomes" id="UP000002512">
    <property type="component" value="Chromosome"/>
</dbReference>
<dbReference type="GO" id="GO:0008441">
    <property type="term" value="F:3'(2'),5'-bisphosphate nucleotidase activity"/>
    <property type="evidence" value="ECO:0007669"/>
    <property type="project" value="UniProtKB-EC"/>
</dbReference>
<dbReference type="GO" id="GO:0004527">
    <property type="term" value="F:exonuclease activity"/>
    <property type="evidence" value="ECO:0007669"/>
    <property type="project" value="UniProtKB-KW"/>
</dbReference>
<dbReference type="GO" id="GO:0003676">
    <property type="term" value="F:nucleic acid binding"/>
    <property type="evidence" value="ECO:0007669"/>
    <property type="project" value="InterPro"/>
</dbReference>
<dbReference type="Gene3D" id="3.10.310.30">
    <property type="match status" value="1"/>
</dbReference>
<dbReference type="Gene3D" id="3.90.1640.10">
    <property type="entry name" value="inorganic pyrophosphatase (n-terminal core)"/>
    <property type="match status" value="1"/>
</dbReference>
<dbReference type="InterPro" id="IPR001667">
    <property type="entry name" value="DDH_dom"/>
</dbReference>
<dbReference type="InterPro" id="IPR038763">
    <property type="entry name" value="DHH_sf"/>
</dbReference>
<dbReference type="InterPro" id="IPR003156">
    <property type="entry name" value="DHHA1_dom"/>
</dbReference>
<dbReference type="InterPro" id="IPR051319">
    <property type="entry name" value="Oligoribo/pAp-PDE_c-di-AMP_PDE"/>
</dbReference>
<dbReference type="PANTHER" id="PTHR47618">
    <property type="entry name" value="BIFUNCTIONAL OLIGORIBONUCLEASE AND PAP PHOSPHATASE NRNA"/>
    <property type="match status" value="1"/>
</dbReference>
<dbReference type="PANTHER" id="PTHR47618:SF1">
    <property type="entry name" value="BIFUNCTIONAL OLIGORIBONUCLEASE AND PAP PHOSPHATASE NRNA"/>
    <property type="match status" value="1"/>
</dbReference>
<dbReference type="Pfam" id="PF01368">
    <property type="entry name" value="DHH"/>
    <property type="match status" value="1"/>
</dbReference>
<dbReference type="Pfam" id="PF02272">
    <property type="entry name" value="DHHA1"/>
    <property type="match status" value="1"/>
</dbReference>
<dbReference type="SUPFAM" id="SSF64182">
    <property type="entry name" value="DHH phosphoesterases"/>
    <property type="match status" value="1"/>
</dbReference>
<comment type="function">
    <text evidence="1">Probable bifunctional enzyme which has pAp-phosphatase and may have oligoribonuclease activities. Converts 3'(2')-phosphoadenosine 5'-phosphate (PAP) to AMP. Complementation studies suggest it also has RNA oligoribonuclease activity, although this has not been shown in vitro using 5- or 20-mers. Involved in superoxide stress response and sulfur assimilation.</text>
</comment>
<comment type="catalytic activity">
    <reaction>
        <text>adenosine 3',5'-bisphosphate + H2O = AMP + phosphate</text>
        <dbReference type="Rhea" id="RHEA:10040"/>
        <dbReference type="ChEBI" id="CHEBI:15377"/>
        <dbReference type="ChEBI" id="CHEBI:43474"/>
        <dbReference type="ChEBI" id="CHEBI:58343"/>
        <dbReference type="ChEBI" id="CHEBI:456215"/>
        <dbReference type="EC" id="3.1.3.7"/>
    </reaction>
</comment>
<comment type="cofactor">
    <cofactor evidence="1">
        <name>Mn(2+)</name>
        <dbReference type="ChEBI" id="CHEBI:29035"/>
    </cofactor>
    <cofactor evidence="1">
        <name>Mg(2+)</name>
        <dbReference type="ChEBI" id="CHEBI:18420"/>
    </cofactor>
</comment>
<comment type="disruption phenotype">
    <text evidence="1">Increased sensitivity to superoxide stress inducers methyl viologen and menadione. Grows poorly in the absence of cysteine.</text>
</comment>
<comment type="miscellaneous">
    <text evidence="3">Part of the SMU_1296-SMU_1298 (rpmE2) operon.</text>
</comment>
<comment type="miscellaneous">
    <text evidence="3">Is able to complement a cysQ mutant in E.coli.</text>
</comment>
<comment type="similarity">
    <text evidence="2">Belongs to the NrnA oligoribonuclease family.</text>
</comment>
<feature type="chain" id="PRO_0000419754" description="Probable bifunctional oligoribonuclease and PAP phosphatase NrnA">
    <location>
        <begin position="1"/>
        <end position="310"/>
    </location>
</feature>
<protein>
    <recommendedName>
        <fullName>Probable bifunctional oligoribonuclease and PAP phosphatase NrnA</fullName>
        <ecNumber>3.1.-.-</ecNumber>
    </recommendedName>
    <alternativeName>
        <fullName>3'-phosphoadenosine 5'-phosphate phosphatase</fullName>
        <shortName>PAP phosphatase</shortName>
    </alternativeName>
    <alternativeName>
        <fullName>Probable 3'(2'),5'-bisphosphate nucleotidase</fullName>
        <ecNumber>3.1.3.7</ecNumber>
    </alternativeName>
    <alternativeName>
        <fullName>nanoRNase</fullName>
    </alternativeName>
</protein>
<name>NRNA_STRMU</name>
<proteinExistence type="evidence at protein level"/>
<evidence type="ECO:0000269" key="1">
    <source>
    </source>
</evidence>
<evidence type="ECO:0000305" key="2"/>
<evidence type="ECO:0000305" key="3">
    <source>
    </source>
</evidence>